<accession>A5H0J4</accession>
<gene>
    <name type="primary">FUR1</name>
    <name type="synonym">PYD16</name>
    <name type="synonym">URC6</name>
</gene>
<reference key="1">
    <citation type="journal article" date="2008" name="J. Mol. Biol.">
        <title>A second pathway to degrade pyrimidine nucleic acid precursors in eukaryotes.</title>
        <authorList>
            <person name="Andersen G."/>
            <person name="Bjoernberg O."/>
            <person name="Polakova S."/>
            <person name="Pynyaha Y."/>
            <person name="Rasmussen A."/>
            <person name="Moeller K."/>
            <person name="Hofer A."/>
            <person name="Moritz T."/>
            <person name="Sandrini M.P."/>
            <person name="Merico A.M."/>
            <person name="Compagno C."/>
            <person name="Aekerlund H.E."/>
            <person name="Gojkovic Z."/>
            <person name="Piskur J."/>
        </authorList>
    </citation>
    <scope>NUCLEOTIDE SEQUENCE [GENOMIC DNA]</scope>
    <scope>FUNCTION</scope>
</reference>
<keyword id="KW-0021">Allosteric enzyme</keyword>
<keyword id="KW-0328">Glycosyltransferase</keyword>
<keyword id="KW-0342">GTP-binding</keyword>
<keyword id="KW-0547">Nucleotide-binding</keyword>
<keyword id="KW-0808">Transferase</keyword>
<comment type="function">
    <text evidence="3">Catalyzes the conversion of uracil and 5-phospho-alpha-D-ribose 1-diphosphate (PRPP) to UMP and diphosphate.</text>
</comment>
<comment type="catalytic activity">
    <reaction>
        <text>UMP + diphosphate = 5-phospho-alpha-D-ribose 1-diphosphate + uracil</text>
        <dbReference type="Rhea" id="RHEA:13017"/>
        <dbReference type="ChEBI" id="CHEBI:17568"/>
        <dbReference type="ChEBI" id="CHEBI:33019"/>
        <dbReference type="ChEBI" id="CHEBI:57865"/>
        <dbReference type="ChEBI" id="CHEBI:58017"/>
        <dbReference type="EC" id="2.4.2.9"/>
    </reaction>
</comment>
<comment type="cofactor">
    <cofactor evidence="1">
        <name>Mg(2+)</name>
        <dbReference type="ChEBI" id="CHEBI:18420"/>
    </cofactor>
    <text evidence="1">Binds 1 Mg(2+) ion per subunit. The magnesium is bound as Mg-PRPP.</text>
</comment>
<comment type="activity regulation">
    <text evidence="1">Allosterically activated by GTP.</text>
</comment>
<comment type="pathway">
    <text>Pyrimidine metabolism; UMP biosynthesis via salvage pathway; UMP from uracil: step 1/1.</text>
</comment>
<comment type="similarity">
    <text evidence="4">Belongs to the UPRTase family.</text>
</comment>
<name>UPP_LACKL</name>
<evidence type="ECO:0000250" key="1"/>
<evidence type="ECO:0000250" key="2">
    <source>
        <dbReference type="UniProtKB" id="Q26998"/>
    </source>
</evidence>
<evidence type="ECO:0000269" key="3">
    <source>
    </source>
</evidence>
<evidence type="ECO:0000305" key="4"/>
<organism>
    <name type="scientific">Lachancea kluyveri</name>
    <name type="common">Yeast</name>
    <name type="synonym">Saccharomyces kluyveri</name>
    <dbReference type="NCBI Taxonomy" id="4934"/>
    <lineage>
        <taxon>Eukaryota</taxon>
        <taxon>Fungi</taxon>
        <taxon>Dikarya</taxon>
        <taxon>Ascomycota</taxon>
        <taxon>Saccharomycotina</taxon>
        <taxon>Saccharomycetes</taxon>
        <taxon>Saccharomycetales</taxon>
        <taxon>Saccharomycetaceae</taxon>
        <taxon>Lachancea</taxon>
    </lineage>
</organism>
<dbReference type="EC" id="2.4.2.9"/>
<dbReference type="EMBL" id="DQ512720">
    <property type="protein sequence ID" value="ABF58892.1"/>
    <property type="molecule type" value="Genomic_DNA"/>
</dbReference>
<dbReference type="SMR" id="A5H0J4"/>
<dbReference type="UniPathway" id="UPA00574">
    <property type="reaction ID" value="UER00636"/>
</dbReference>
<dbReference type="GO" id="GO:0005525">
    <property type="term" value="F:GTP binding"/>
    <property type="evidence" value="ECO:0007669"/>
    <property type="project" value="UniProtKB-KW"/>
</dbReference>
<dbReference type="GO" id="GO:0004845">
    <property type="term" value="F:uracil phosphoribosyltransferase activity"/>
    <property type="evidence" value="ECO:0007669"/>
    <property type="project" value="UniProtKB-EC"/>
</dbReference>
<dbReference type="GO" id="GO:0044206">
    <property type="term" value="P:UMP salvage"/>
    <property type="evidence" value="ECO:0007669"/>
    <property type="project" value="UniProtKB-UniPathway"/>
</dbReference>
<dbReference type="CDD" id="cd06223">
    <property type="entry name" value="PRTases_typeI"/>
    <property type="match status" value="1"/>
</dbReference>
<dbReference type="FunFam" id="3.40.50.2020:FF:000023">
    <property type="entry name" value="Probable uracil phosphoribosyltransferase"/>
    <property type="match status" value="1"/>
</dbReference>
<dbReference type="Gene3D" id="3.40.50.2020">
    <property type="match status" value="1"/>
</dbReference>
<dbReference type="InterPro" id="IPR000836">
    <property type="entry name" value="PRibTrfase_dom"/>
</dbReference>
<dbReference type="InterPro" id="IPR029057">
    <property type="entry name" value="PRTase-like"/>
</dbReference>
<dbReference type="NCBIfam" id="NF001097">
    <property type="entry name" value="PRK00129.1"/>
    <property type="match status" value="1"/>
</dbReference>
<dbReference type="Pfam" id="PF14681">
    <property type="entry name" value="UPRTase"/>
    <property type="match status" value="1"/>
</dbReference>
<dbReference type="SUPFAM" id="SSF53271">
    <property type="entry name" value="PRTase-like"/>
    <property type="match status" value="1"/>
</dbReference>
<protein>
    <recommendedName>
        <fullName>Uracil phosphoribosyltransferase</fullName>
        <shortName>UPRTase</shortName>
        <ecNumber>2.4.2.9</ecNumber>
    </recommendedName>
    <alternativeName>
        <fullName>Pyrimidine-degrading protein 16</fullName>
    </alternativeName>
    <alternativeName>
        <fullName>UMP pyrophosphorylase</fullName>
    </alternativeName>
    <alternativeName>
        <fullName>Uracil catabolism protein 6</fullName>
    </alternativeName>
</protein>
<proteinExistence type="inferred from homology"/>
<sequence>MSSEPFKNVYLLPQTNQLLGLYTIIRDKKTKRPDFVFYSDRIIRLLVEEGLNHLPVTPNTVETDTNQSFDGVSFLGKICGVSIVRAGESMEQGLRDCCRSVRIGKILIQRDEETALPKLFYEKLPDDIADRFVFLLDPMLATGGSAIMATEVLIKRGVKPERIFFLNLICSKEGIENYHAKFPTIKIVTGALDKGLDANRYLIPGLGDFGDRYYCI</sequence>
<feature type="chain" id="PRO_0000372695" description="Uracil phosphoribosyltransferase">
    <location>
        <begin position="1"/>
        <end position="216"/>
    </location>
</feature>
<feature type="binding site" evidence="2">
    <location>
        <position position="32"/>
    </location>
    <ligand>
        <name>GTP</name>
        <dbReference type="ChEBI" id="CHEBI:37565"/>
    </ligand>
</feature>
<feature type="binding site" evidence="2">
    <location>
        <position position="41"/>
    </location>
    <ligand>
        <name>GTP</name>
        <dbReference type="ChEBI" id="CHEBI:37565"/>
    </ligand>
</feature>
<feature type="binding site" evidence="2">
    <location>
        <begin position="75"/>
        <end position="78"/>
    </location>
    <ligand>
        <name>GTP</name>
        <dbReference type="ChEBI" id="CHEBI:37565"/>
    </ligand>
</feature>
<feature type="binding site" evidence="1">
    <location>
        <position position="77"/>
    </location>
    <ligand>
        <name>GTP</name>
        <dbReference type="ChEBI" id="CHEBI:37565"/>
    </ligand>
</feature>
<feature type="binding site" evidence="2">
    <location>
        <position position="85"/>
    </location>
    <ligand>
        <name>5-phospho-alpha-D-ribose 1-diphosphate</name>
        <dbReference type="ChEBI" id="CHEBI:58017"/>
    </ligand>
</feature>
<feature type="binding site" evidence="2">
    <location>
        <position position="102"/>
    </location>
    <ligand>
        <name>GTP</name>
        <dbReference type="ChEBI" id="CHEBI:37565"/>
    </ligand>
</feature>
<feature type="binding site" evidence="2">
    <location>
        <position position="110"/>
    </location>
    <ligand>
        <name>5-phospho-alpha-D-ribose 1-diphosphate</name>
        <dbReference type="ChEBI" id="CHEBI:58017"/>
    </ligand>
</feature>
<feature type="binding site" evidence="2">
    <location>
        <position position="131"/>
    </location>
    <ligand>
        <name>GTP</name>
        <dbReference type="ChEBI" id="CHEBI:37565"/>
    </ligand>
</feature>
<feature type="binding site" evidence="2">
    <location>
        <begin position="137"/>
        <end position="145"/>
    </location>
    <ligand>
        <name>5-phospho-alpha-D-ribose 1-diphosphate</name>
        <dbReference type="ChEBI" id="CHEBI:58017"/>
    </ligand>
</feature>
<feature type="binding site" evidence="2">
    <location>
        <position position="137"/>
    </location>
    <ligand>
        <name>5-phospho-alpha-D-ribose 1-diphosphate</name>
        <dbReference type="ChEBI" id="CHEBI:58017"/>
    </ligand>
</feature>
<feature type="binding site" evidence="1">
    <location>
        <position position="201"/>
    </location>
    <ligand>
        <name>D-ribose 5-phosphate</name>
        <dbReference type="ChEBI" id="CHEBI:78346"/>
    </ligand>
</feature>
<feature type="binding site" evidence="2">
    <location>
        <position position="202"/>
    </location>
    <ligand>
        <name>uracil</name>
        <dbReference type="ChEBI" id="CHEBI:17568"/>
    </ligand>
</feature>
<feature type="binding site" evidence="2">
    <location>
        <begin position="207"/>
        <end position="209"/>
    </location>
    <ligand>
        <name>uracil</name>
        <dbReference type="ChEBI" id="CHEBI:17568"/>
    </ligand>
</feature>
<feature type="binding site" evidence="1">
    <location>
        <position position="208"/>
    </location>
    <ligand>
        <name>5-phospho-alpha-D-ribose 1-diphosphate</name>
        <dbReference type="ChEBI" id="CHEBI:58017"/>
    </ligand>
</feature>